<keyword id="KW-1185">Reference proteome</keyword>
<feature type="chain" id="PRO_0000065283" description="Uncharacterized protein F09G8.7">
    <location>
        <begin position="1"/>
        <end position="100"/>
    </location>
</feature>
<organism>
    <name type="scientific">Caenorhabditis elegans</name>
    <dbReference type="NCBI Taxonomy" id="6239"/>
    <lineage>
        <taxon>Eukaryota</taxon>
        <taxon>Metazoa</taxon>
        <taxon>Ecdysozoa</taxon>
        <taxon>Nematoda</taxon>
        <taxon>Chromadorea</taxon>
        <taxon>Rhabditida</taxon>
        <taxon>Rhabditina</taxon>
        <taxon>Rhabditomorpha</taxon>
        <taxon>Rhabditoidea</taxon>
        <taxon>Rhabditidae</taxon>
        <taxon>Peloderinae</taxon>
        <taxon>Caenorhabditis</taxon>
    </lineage>
</organism>
<accession>P34392</accession>
<dbReference type="EMBL" id="FO080289">
    <property type="protein sequence ID" value="CCD62646.1"/>
    <property type="molecule type" value="Genomic_DNA"/>
</dbReference>
<dbReference type="PIR" id="S44794">
    <property type="entry name" value="S44794"/>
</dbReference>
<dbReference type="RefSeq" id="NP_498816.1">
    <property type="nucleotide sequence ID" value="NM_066415.4"/>
</dbReference>
<dbReference type="BioGRID" id="49069">
    <property type="interactions" value="4"/>
</dbReference>
<dbReference type="FunCoup" id="P34392">
    <property type="interactions" value="1461"/>
</dbReference>
<dbReference type="IntAct" id="P34392">
    <property type="interactions" value="1"/>
</dbReference>
<dbReference type="PaxDb" id="6239-F09G8.7"/>
<dbReference type="PeptideAtlas" id="P34392"/>
<dbReference type="EnsemblMetazoa" id="F09G8.7.1">
    <property type="protein sequence ID" value="F09G8.7.1"/>
    <property type="gene ID" value="WBGene00017321"/>
</dbReference>
<dbReference type="GeneID" id="184270"/>
<dbReference type="KEGG" id="cel:CELE_F09G8.7"/>
<dbReference type="UCSC" id="F09G8.7">
    <property type="organism name" value="c. elegans"/>
</dbReference>
<dbReference type="AGR" id="WB:WBGene00017321"/>
<dbReference type="CTD" id="184270"/>
<dbReference type="WormBase" id="F09G8.7">
    <property type="protein sequence ID" value="CE00142"/>
    <property type="gene ID" value="WBGene00017321"/>
</dbReference>
<dbReference type="eggNOG" id="ENOG502R936">
    <property type="taxonomic scope" value="Eukaryota"/>
</dbReference>
<dbReference type="HOGENOM" id="CLU_2308544_0_0_1"/>
<dbReference type="InParanoid" id="P34392"/>
<dbReference type="OMA" id="TIQVQYD"/>
<dbReference type="OrthoDB" id="5792301at2759"/>
<dbReference type="PRO" id="PR:P34392"/>
<dbReference type="Proteomes" id="UP000001940">
    <property type="component" value="Chromosome III"/>
</dbReference>
<dbReference type="Bgee" id="WBGene00017321">
    <property type="expression patterns" value="Expressed in pharyngeal muscle cell (C elegans) and 4 other cell types or tissues"/>
</dbReference>
<name>YLS7_CAEEL</name>
<proteinExistence type="predicted"/>
<gene>
    <name type="ORF">F09G8.7</name>
</gene>
<sequence length="100" mass="11522">MSKSNKKSKPKYTLENLQQIPGVLAFMICKGNTIAHSTFLEAENPRQIAYNAMRMATRTQGTELRDLKVHTIQVQYDDFQIEMFQIGGHFCILKKRVDTD</sequence>
<protein>
    <recommendedName>
        <fullName>Uncharacterized protein F09G8.7</fullName>
    </recommendedName>
</protein>
<reference key="1">
    <citation type="journal article" date="1994" name="Nature">
        <title>2.2 Mb of contiguous nucleotide sequence from chromosome III of C. elegans.</title>
        <authorList>
            <person name="Wilson R."/>
            <person name="Ainscough R."/>
            <person name="Anderson K."/>
            <person name="Baynes C."/>
            <person name="Berks M."/>
            <person name="Bonfield J."/>
            <person name="Burton J."/>
            <person name="Connell M."/>
            <person name="Copsey T."/>
            <person name="Cooper J."/>
            <person name="Coulson A."/>
            <person name="Craxton M."/>
            <person name="Dear S."/>
            <person name="Du Z."/>
            <person name="Durbin R."/>
            <person name="Favello A."/>
            <person name="Fraser A."/>
            <person name="Fulton L."/>
            <person name="Gardner A."/>
            <person name="Green P."/>
            <person name="Hawkins T."/>
            <person name="Hillier L."/>
            <person name="Jier M."/>
            <person name="Johnston L."/>
            <person name="Jones M."/>
            <person name="Kershaw J."/>
            <person name="Kirsten J."/>
            <person name="Laisster N."/>
            <person name="Latreille P."/>
            <person name="Lightning J."/>
            <person name="Lloyd C."/>
            <person name="Mortimore B."/>
            <person name="O'Callaghan M."/>
            <person name="Parsons J."/>
            <person name="Percy C."/>
            <person name="Rifken L."/>
            <person name="Roopra A."/>
            <person name="Saunders D."/>
            <person name="Shownkeen R."/>
            <person name="Sims M."/>
            <person name="Smaldon N."/>
            <person name="Smith A."/>
            <person name="Smith M."/>
            <person name="Sonnhammer E."/>
            <person name="Staden R."/>
            <person name="Sulston J."/>
            <person name="Thierry-Mieg J."/>
            <person name="Thomas K."/>
            <person name="Vaudin M."/>
            <person name="Vaughan K."/>
            <person name="Waterston R."/>
            <person name="Watson A."/>
            <person name="Weinstock L."/>
            <person name="Wilkinson-Sproat J."/>
            <person name="Wohldman P."/>
        </authorList>
    </citation>
    <scope>NUCLEOTIDE SEQUENCE [LARGE SCALE GENOMIC DNA]</scope>
    <source>
        <strain>Bristol N2</strain>
    </source>
</reference>
<reference key="2">
    <citation type="journal article" date="1998" name="Science">
        <title>Genome sequence of the nematode C. elegans: a platform for investigating biology.</title>
        <authorList>
            <consortium name="The C. elegans sequencing consortium"/>
        </authorList>
    </citation>
    <scope>NUCLEOTIDE SEQUENCE [LARGE SCALE GENOMIC DNA]</scope>
    <source>
        <strain>Bristol N2</strain>
    </source>
</reference>